<dbReference type="EMBL" id="CP000930">
    <property type="protein sequence ID" value="ABZ83963.1"/>
    <property type="molecule type" value="Genomic_DNA"/>
</dbReference>
<dbReference type="RefSeq" id="WP_012282479.1">
    <property type="nucleotide sequence ID" value="NC_010337.2"/>
</dbReference>
<dbReference type="SMR" id="B0TC64"/>
<dbReference type="STRING" id="498761.HM1_1386"/>
<dbReference type="KEGG" id="hmo:HM1_1386"/>
<dbReference type="eggNOG" id="COG0255">
    <property type="taxonomic scope" value="Bacteria"/>
</dbReference>
<dbReference type="HOGENOM" id="CLU_158491_5_2_9"/>
<dbReference type="OrthoDB" id="9815192at2"/>
<dbReference type="Proteomes" id="UP000008550">
    <property type="component" value="Chromosome"/>
</dbReference>
<dbReference type="GO" id="GO:0022625">
    <property type="term" value="C:cytosolic large ribosomal subunit"/>
    <property type="evidence" value="ECO:0007669"/>
    <property type="project" value="TreeGrafter"/>
</dbReference>
<dbReference type="GO" id="GO:0003735">
    <property type="term" value="F:structural constituent of ribosome"/>
    <property type="evidence" value="ECO:0007669"/>
    <property type="project" value="InterPro"/>
</dbReference>
<dbReference type="GO" id="GO:0006412">
    <property type="term" value="P:translation"/>
    <property type="evidence" value="ECO:0007669"/>
    <property type="project" value="UniProtKB-UniRule"/>
</dbReference>
<dbReference type="CDD" id="cd00427">
    <property type="entry name" value="Ribosomal_L29_HIP"/>
    <property type="match status" value="1"/>
</dbReference>
<dbReference type="FunFam" id="1.10.287.310:FF:000001">
    <property type="entry name" value="50S ribosomal protein L29"/>
    <property type="match status" value="1"/>
</dbReference>
<dbReference type="Gene3D" id="1.10.287.310">
    <property type="match status" value="1"/>
</dbReference>
<dbReference type="HAMAP" id="MF_00374">
    <property type="entry name" value="Ribosomal_uL29"/>
    <property type="match status" value="1"/>
</dbReference>
<dbReference type="InterPro" id="IPR050063">
    <property type="entry name" value="Ribosomal_protein_uL29"/>
</dbReference>
<dbReference type="InterPro" id="IPR001854">
    <property type="entry name" value="Ribosomal_uL29"/>
</dbReference>
<dbReference type="InterPro" id="IPR036049">
    <property type="entry name" value="Ribosomal_uL29_sf"/>
</dbReference>
<dbReference type="NCBIfam" id="TIGR00012">
    <property type="entry name" value="L29"/>
    <property type="match status" value="1"/>
</dbReference>
<dbReference type="PANTHER" id="PTHR10916">
    <property type="entry name" value="60S RIBOSOMAL PROTEIN L35/50S RIBOSOMAL PROTEIN L29"/>
    <property type="match status" value="1"/>
</dbReference>
<dbReference type="PANTHER" id="PTHR10916:SF0">
    <property type="entry name" value="LARGE RIBOSOMAL SUBUNIT PROTEIN UL29C"/>
    <property type="match status" value="1"/>
</dbReference>
<dbReference type="Pfam" id="PF00831">
    <property type="entry name" value="Ribosomal_L29"/>
    <property type="match status" value="1"/>
</dbReference>
<dbReference type="SUPFAM" id="SSF46561">
    <property type="entry name" value="Ribosomal protein L29 (L29p)"/>
    <property type="match status" value="1"/>
</dbReference>
<evidence type="ECO:0000255" key="1">
    <source>
        <dbReference type="HAMAP-Rule" id="MF_00374"/>
    </source>
</evidence>
<evidence type="ECO:0000305" key="2"/>
<comment type="similarity">
    <text evidence="1">Belongs to the universal ribosomal protein uL29 family.</text>
</comment>
<organism>
    <name type="scientific">Heliobacterium modesticaldum (strain ATCC 51547 / Ice1)</name>
    <dbReference type="NCBI Taxonomy" id="498761"/>
    <lineage>
        <taxon>Bacteria</taxon>
        <taxon>Bacillati</taxon>
        <taxon>Bacillota</taxon>
        <taxon>Clostridia</taxon>
        <taxon>Eubacteriales</taxon>
        <taxon>Heliobacteriaceae</taxon>
        <taxon>Heliomicrobium</taxon>
    </lineage>
</organism>
<sequence length="67" mass="8108">MKAKELHDLSTEELQKKLIDFKDELFRLRFQLATQQLENPMRIRDVRKNIARTQTVLRQRELEAQKA</sequence>
<keyword id="KW-1185">Reference proteome</keyword>
<keyword id="KW-0687">Ribonucleoprotein</keyword>
<keyword id="KW-0689">Ribosomal protein</keyword>
<feature type="chain" id="PRO_1000121777" description="Large ribosomal subunit protein uL29">
    <location>
        <begin position="1"/>
        <end position="67"/>
    </location>
</feature>
<protein>
    <recommendedName>
        <fullName evidence="1">Large ribosomal subunit protein uL29</fullName>
    </recommendedName>
    <alternativeName>
        <fullName evidence="2">50S ribosomal protein L29</fullName>
    </alternativeName>
</protein>
<reference key="1">
    <citation type="journal article" date="2008" name="J. Bacteriol.">
        <title>The genome of Heliobacterium modesticaldum, a phototrophic representative of the Firmicutes containing the simplest photosynthetic apparatus.</title>
        <authorList>
            <person name="Sattley W.M."/>
            <person name="Madigan M.T."/>
            <person name="Swingley W.D."/>
            <person name="Cheung P.C."/>
            <person name="Clocksin K.M."/>
            <person name="Conrad A.L."/>
            <person name="Dejesa L.C."/>
            <person name="Honchak B.M."/>
            <person name="Jung D.O."/>
            <person name="Karbach L.E."/>
            <person name="Kurdoglu A."/>
            <person name="Lahiri S."/>
            <person name="Mastrian S.D."/>
            <person name="Page L.E."/>
            <person name="Taylor H.L."/>
            <person name="Wang Z.T."/>
            <person name="Raymond J."/>
            <person name="Chen M."/>
            <person name="Blankenship R.E."/>
            <person name="Touchman J.W."/>
        </authorList>
    </citation>
    <scope>NUCLEOTIDE SEQUENCE [LARGE SCALE GENOMIC DNA]</scope>
    <source>
        <strain>ATCC 51547 / Ice1</strain>
    </source>
</reference>
<name>RL29_HELMI</name>
<proteinExistence type="inferred from homology"/>
<accession>B0TC64</accession>
<gene>
    <name evidence="1" type="primary">rpmC</name>
    <name type="ordered locus">Helmi_13380</name>
    <name type="ORF">HM1_1386</name>
</gene>